<comment type="function">
    <text evidence="12 13 16 17 18 19 20 21 23 24 25 26 27 28 29 30">Endoribonuclease which functions in microRNA- (miRNA) gene silencing and, independently of its ribonuclease III activity, also acts in the short interfering RNA- (siRNA) gene silencing pathway (PubMed:11201747, PubMed:11498593, PubMed:15066283, PubMed:15918769, PubMed:15985611, PubMed:17666393, PubMed:17928574, PubMed:19451544, PubMed:19635780, PubMed:21419681, PubMed:21926993, PubMed:24488111, PubMed:36182693). Cleaves hairpin precursor miRNAs (pre-miRNA) to generate mature miRNAs (miRNAs) that are between twenty-one to twenty-four nucleotides in length and function in RNA silencing and post-transcriptional regulation of gene expression (PubMed:15066283, PubMed:15918769, PubMed:15985611, PubMed:17666393, PubMed:17928574, PubMed:19451544, PubMed:19635780, PubMed:21419681, PubMed:21926993, PubMed:23063653, PubMed:24488111, PubMed:36182693). Also functions in miRNA loading and assembly of the Argonaute 1 (AGO1)-containing RNA-induced silencing complex (miRISC), with the miRNAs serving as a guide to direct the miRISC to complementary RNAs to degrade them or prevent their translation (PubMed:15066283, PubMed:17928574, PubMed:19451544). Independently of its catalytic activity, functions in the siRNA silencing pathway by promoting assembly of the siRNA-directed Argonaute 2 (AGO2)-containing RISC (siRISC) (PubMed:15066283). Required for the proper formation of a stable intermediate (R2) in siRISC assembly, which is formed from the R1 precursor complex (containing Dcr-2, R2D2 and the siRNA) and is used for assembly of the mature (R3) siRISC complex (PubMed:15066283). It is not required for siRNA biogenesis (PubMed:15066283, PubMed:21419681). During embryogenesis, involved in germline fate determination (PubMed:16949822). Post-transcriptionally regulates mei-P26 expression through the microRNA pathway, which in turn post-translationally regulates myc protein levels; involved in regulating cell and tissue growth (PubMed:20400939).</text>
</comment>
<comment type="catalytic activity">
    <reaction evidence="16 17 20 27">
        <text>Endonucleolytic cleavage to 5'-phosphomonoester.</text>
        <dbReference type="EC" id="3.1.26.3"/>
    </reaction>
</comment>
<comment type="cofactor">
    <cofactor evidence="17 30">
        <name>Mg(2+)</name>
        <dbReference type="ChEBI" id="CHEBI:18420"/>
    </cofactor>
    <cofactor evidence="1">
        <name>Mn(2+)</name>
        <dbReference type="ChEBI" id="CHEBI:29035"/>
    </cofactor>
</comment>
<comment type="activity regulation">
    <text evidence="26 29">Activity towards pre-miRNAs is not inhibited by inorganic phosphate.</text>
</comment>
<comment type="subunit">
    <text evidence="13 14 17 18 19 20 23 24 30">Component of the miRNA-directed RISC loading complex (miRLC), composed of at least Dcr-1, AGO1 and loqs, which processes pre-miRNAs and loads the resulting miRNAs into the Argonaute 1 (AGO1)-containing RNA-induced silencing complex (miRISC) (PubMed:15918769, PubMed:19451544). Interacts (via helicase domain) with dicing cofactor loqs isoform-PB (loqs-PB) (via DRBM 3 domain); this interaction enhances processing of pre-miRNAs by increasing substrate binding affinity of the dicer (PubMed:15985611, PubMed:17666393, PubMed:19635780, PubMed:36182693). Also able to interact with loqs isoforms PA and PC, however the relevance of such interactions are unclear in vivo (PubMed:17666393, PubMed:19635780). Different regions of the Dcr-1-loqs-PB heterodimer collaborate to recognize, bind and position the pre-miRNA for Dcr-1 mediated cleavage (PubMed:36182693). In the absence of authentic miRNA substrates, the heterodimer favors a closed, catalytically incompetent, conformation, whereas binding of authentic pre-miRNA substrates stabilizes the relatively rare open, catalytically competent, conformation of the heterodimer (PubMed:36182693). During substrate recognition, the Dcr-1 PAZ domain and pre-miRNA interact with the DRBM 1 domain of loqs-PB, which likely contributes to substrate recognition and stabilization (PubMed:36182693). At the miRNA binding stage, the Dcr-1 DRBM domain and loqs-PB DRBM domains then bind the pre-miRNA in tandem to form a tight 'belt' around the pre-miRNA stem, the pre-miRNA loop is docked in the loop-binding region formed by DUF283, DRBM and part of the N terminus of Dcr-1, and the loqs-PB DRBM 1 and the wing domain of Dcr-1 act together to bind the 5' and 3' pre-miRNA termini within the PAZ and platform domains of Dcr-1 (PubMed:36182693). These interactions between the proteins and their pre-miRNA substrate stabilize a distorted form of the pre-miRNA and position the scissile phosphodiester bonds of the pre-miRNA at the RNase III catalytic cleavage sites of Dcr-1 (PubMed:36182693). Following Dcr-1 mediated cleavage, the miRNA duplex remains bound to loqs-PB DRBM 1, which dissociates from the Dcr-1 RNase III 1 domain but remains in contact with the PAZ and wing domains, suggesting that the heterodimer presents the mature miRNA to Ago2 for loading into the RNA-induced silencing complex (miRISC) (PubMed:36182693). Interacts with AGO2 and Fmr1 to form a RNA-induced silencing complex (siRISC), a ribonucleoprotein (RNP) complex involved in translation regulation; other components of the complex are RpL5, RpL11, AGO2 and Rm62 (PubMed:11498593, PubMed:12368261). Interacts with piwi and vas; these interactions occur in the polar granules (PubMed:16949822).</text>
</comment>
<comment type="interaction">
    <interactant intactId="EBI-112170">
        <id>Q9VCU9</id>
    </interactant>
    <interactant intactId="EBI-162836">
        <id>Q9VJY9</id>
        <label>loqs</label>
    </interactant>
    <organismsDiffer>false</organismsDiffer>
    <experiments>14</experiments>
</comment>
<comment type="subcellular location">
    <subcellularLocation>
        <location evidence="17">Cytoplasm</location>
    </subcellularLocation>
    <subcellularLocation>
        <location evidence="32">Cytoplasm</location>
        <location evidence="32">Cytosol</location>
    </subcellularLocation>
</comment>
<comment type="domain">
    <text evidence="27">The helicase domain is essential for substrate discrimination (PubMed:21926993). Probably identifies authentic miRNA substrates, by binding to the miRNA characteristic single-stranded terminal loop, checking the loop size, and measuring the distance between the terminal loop and the 3' overhanging (3'ovr) termini which is bound by the PAZ domain (PubMed:21926993).</text>
</comment>
<comment type="domain">
    <text evidence="30">The PAZ domain is important for substrate discrimination as it recognizes and binds the characteristic two-nucleotide, 3' overhanging (3'ovr) termini of pre-miRNA substrates prior to cleavage (PubMed:36182693). The PAZ and platform domains form a binding pocket that binds the 5' terminal nucleotide of the pre-miRNA (PubMed:36182693).</text>
</comment>
<comment type="domain">
    <text evidence="20 30">RNase III 1 domain is necessary for cleaving the 3' (bottom) strand of pre-miRNA hairpins (pri-let-7) (PubMed:17666393, PubMed:36182693). Together with the RNase III 2 domain forms a cleavage processing center with the RNase III 1 and RNase III 2 domains cutting the 3' (bottom) and 5' (top) strand respectively, excising the miRNA from the pre-miRNA pri-let-7 and creating the characteristic two-nucleotide 3' overhang terminus (PubMed:17666393, PubMed:36182693).</text>
</comment>
<comment type="domain">
    <text evidence="20 30">RNase III 2 domain is necessary for cleaving the 5' (top) strand of pre-miRNA hairpins (pri-let-7) (PubMed:17666393, PubMed:36182693). Together with the RNase III 1 domain forms a cleavage processing center with the RNase III 1 and RNase III 2 domains cutting the 3' (bottom) and 5' (top) strand respectively, excising the miRNA from the pre-miRNA pri-let-7 and creating the characteristic two-nucleotide 3' overhang terminus (PubMed:17666393, PubMed:36182693).</text>
</comment>
<comment type="domain">
    <text evidence="30">Within the closed conformation of the Dcr-1-loqs-PB heterodimer, the DRBM domain blocks access of pre-miRNA substrates to the RNase III active sites.</text>
</comment>
<comment type="disruption phenotype">
    <text evidence="25">RNAi-mediated knockdown results in reduced cell and tissue size in larval wing imaginal discs and reduced adult wing size; cells show a delay in G1-S transition.</text>
</comment>
<comment type="similarity">
    <text evidence="9">Belongs to the helicase family. Dicer subfamily.</text>
</comment>
<comment type="sequence caution" evidence="34">
    <conflict type="erroneous initiation">
        <sequence resource="EMBL-CDS" id="AAK84929"/>
    </conflict>
    <text>Truncated N-terminus.</text>
</comment>
<proteinExistence type="evidence at protein level"/>
<evidence type="ECO:0000250" key="1"/>
<evidence type="ECO:0000250" key="2">
    <source>
        <dbReference type="UniProtKB" id="A1ZAW0"/>
    </source>
</evidence>
<evidence type="ECO:0000250" key="3">
    <source>
        <dbReference type="UniProtKB" id="Q9UPY3"/>
    </source>
</evidence>
<evidence type="ECO:0000255" key="4"/>
<evidence type="ECO:0000255" key="5">
    <source>
        <dbReference type="PROSITE-ProRule" id="PRU00142"/>
    </source>
</evidence>
<evidence type="ECO:0000255" key="6">
    <source>
        <dbReference type="PROSITE-ProRule" id="PRU00177"/>
    </source>
</evidence>
<evidence type="ECO:0000255" key="7">
    <source>
        <dbReference type="PROSITE-ProRule" id="PRU00266"/>
    </source>
</evidence>
<evidence type="ECO:0000255" key="8">
    <source>
        <dbReference type="PROSITE-ProRule" id="PRU00542"/>
    </source>
</evidence>
<evidence type="ECO:0000255" key="9">
    <source>
        <dbReference type="PROSITE-ProRule" id="PRU00657"/>
    </source>
</evidence>
<evidence type="ECO:0000256" key="10">
    <source>
        <dbReference type="SAM" id="MobiDB-lite"/>
    </source>
</evidence>
<evidence type="ECO:0000269" key="11">
    <source>
    </source>
</evidence>
<evidence type="ECO:0000269" key="12">
    <source>
    </source>
</evidence>
<evidence type="ECO:0000269" key="13">
    <source>
    </source>
</evidence>
<evidence type="ECO:0000269" key="14">
    <source>
    </source>
</evidence>
<evidence type="ECO:0000269" key="15">
    <source>
    </source>
</evidence>
<evidence type="ECO:0000269" key="16">
    <source>
    </source>
</evidence>
<evidence type="ECO:0000269" key="17">
    <source>
    </source>
</evidence>
<evidence type="ECO:0000269" key="18">
    <source>
    </source>
</evidence>
<evidence type="ECO:0000269" key="19">
    <source>
    </source>
</evidence>
<evidence type="ECO:0000269" key="20">
    <source>
    </source>
</evidence>
<evidence type="ECO:0000269" key="21">
    <source>
    </source>
</evidence>
<evidence type="ECO:0000269" key="22">
    <source>
    </source>
</evidence>
<evidence type="ECO:0000269" key="23">
    <source>
    </source>
</evidence>
<evidence type="ECO:0000269" key="24">
    <source>
    </source>
</evidence>
<evidence type="ECO:0000269" key="25">
    <source>
    </source>
</evidence>
<evidence type="ECO:0000269" key="26">
    <source>
    </source>
</evidence>
<evidence type="ECO:0000269" key="27">
    <source>
    </source>
</evidence>
<evidence type="ECO:0000269" key="28">
    <source>
    </source>
</evidence>
<evidence type="ECO:0000269" key="29">
    <source>
    </source>
</evidence>
<evidence type="ECO:0000269" key="30">
    <source>
    </source>
</evidence>
<evidence type="ECO:0000303" key="31">
    <source>
    </source>
</evidence>
<evidence type="ECO:0000303" key="32">
    <source>
    </source>
</evidence>
<evidence type="ECO:0000303" key="33">
    <source>
    </source>
</evidence>
<evidence type="ECO:0000305" key="34"/>
<evidence type="ECO:0000312" key="35">
    <source>
        <dbReference type="EMBL" id="AAF56056.1"/>
    </source>
</evidence>
<evidence type="ECO:0000312" key="36">
    <source>
        <dbReference type="EMBL" id="AAK84929.1"/>
    </source>
</evidence>
<evidence type="ECO:0000312" key="37">
    <source>
        <dbReference type="FlyBase" id="FBgn0039016"/>
    </source>
</evidence>
<evidence type="ECO:0007744" key="38">
    <source>
        <dbReference type="PDB" id="8DFV"/>
    </source>
</evidence>
<evidence type="ECO:0007744" key="39">
    <source>
        <dbReference type="PDB" id="8DG5"/>
    </source>
</evidence>
<evidence type="ECO:0007744" key="40">
    <source>
        <dbReference type="PDB" id="8DG7"/>
    </source>
</evidence>
<evidence type="ECO:0007744" key="41">
    <source>
        <dbReference type="PDB" id="8DGA"/>
    </source>
</evidence>
<evidence type="ECO:0007744" key="42">
    <source>
        <dbReference type="PDB" id="8DGI"/>
    </source>
</evidence>
<evidence type="ECO:0007744" key="43">
    <source>
        <dbReference type="PDB" id="8DGJ"/>
    </source>
</evidence>
<evidence type="ECO:0007829" key="44">
    <source>
        <dbReference type="PDB" id="8DFV"/>
    </source>
</evidence>
<evidence type="ECO:0007829" key="45">
    <source>
        <dbReference type="PDB" id="8DG5"/>
    </source>
</evidence>
<evidence type="ECO:0007829" key="46">
    <source>
        <dbReference type="PDB" id="8DG7"/>
    </source>
</evidence>
<reference evidence="35" key="1">
    <citation type="journal article" date="2000" name="Science">
        <title>The genome sequence of Drosophila melanogaster.</title>
        <authorList>
            <person name="Adams M.D."/>
            <person name="Celniker S.E."/>
            <person name="Holt R.A."/>
            <person name="Evans C.A."/>
            <person name="Gocayne J.D."/>
            <person name="Amanatides P.G."/>
            <person name="Scherer S.E."/>
            <person name="Li P.W."/>
            <person name="Hoskins R.A."/>
            <person name="Galle R.F."/>
            <person name="George R.A."/>
            <person name="Lewis S.E."/>
            <person name="Richards S."/>
            <person name="Ashburner M."/>
            <person name="Henderson S.N."/>
            <person name="Sutton G.G."/>
            <person name="Wortman J.R."/>
            <person name="Yandell M.D."/>
            <person name="Zhang Q."/>
            <person name="Chen L.X."/>
            <person name="Brandon R.C."/>
            <person name="Rogers Y.-H.C."/>
            <person name="Blazej R.G."/>
            <person name="Champe M."/>
            <person name="Pfeiffer B.D."/>
            <person name="Wan K.H."/>
            <person name="Doyle C."/>
            <person name="Baxter E.G."/>
            <person name="Helt G."/>
            <person name="Nelson C.R."/>
            <person name="Miklos G.L.G."/>
            <person name="Abril J.F."/>
            <person name="Agbayani A."/>
            <person name="An H.-J."/>
            <person name="Andrews-Pfannkoch C."/>
            <person name="Baldwin D."/>
            <person name="Ballew R.M."/>
            <person name="Basu A."/>
            <person name="Baxendale J."/>
            <person name="Bayraktaroglu L."/>
            <person name="Beasley E.M."/>
            <person name="Beeson K.Y."/>
            <person name="Benos P.V."/>
            <person name="Berman B.P."/>
            <person name="Bhandari D."/>
            <person name="Bolshakov S."/>
            <person name="Borkova D."/>
            <person name="Botchan M.R."/>
            <person name="Bouck J."/>
            <person name="Brokstein P."/>
            <person name="Brottier P."/>
            <person name="Burtis K.C."/>
            <person name="Busam D.A."/>
            <person name="Butler H."/>
            <person name="Cadieu E."/>
            <person name="Center A."/>
            <person name="Chandra I."/>
            <person name="Cherry J.M."/>
            <person name="Cawley S."/>
            <person name="Dahlke C."/>
            <person name="Davenport L.B."/>
            <person name="Davies P."/>
            <person name="de Pablos B."/>
            <person name="Delcher A."/>
            <person name="Deng Z."/>
            <person name="Mays A.D."/>
            <person name="Dew I."/>
            <person name="Dietz S.M."/>
            <person name="Dodson K."/>
            <person name="Doup L.E."/>
            <person name="Downes M."/>
            <person name="Dugan-Rocha S."/>
            <person name="Dunkov B.C."/>
            <person name="Dunn P."/>
            <person name="Durbin K.J."/>
            <person name="Evangelista C.C."/>
            <person name="Ferraz C."/>
            <person name="Ferriera S."/>
            <person name="Fleischmann W."/>
            <person name="Fosler C."/>
            <person name="Gabrielian A.E."/>
            <person name="Garg N.S."/>
            <person name="Gelbart W.M."/>
            <person name="Glasser K."/>
            <person name="Glodek A."/>
            <person name="Gong F."/>
            <person name="Gorrell J.H."/>
            <person name="Gu Z."/>
            <person name="Guan P."/>
            <person name="Harris M."/>
            <person name="Harris N.L."/>
            <person name="Harvey D.A."/>
            <person name="Heiman T.J."/>
            <person name="Hernandez J.R."/>
            <person name="Houck J."/>
            <person name="Hostin D."/>
            <person name="Houston K.A."/>
            <person name="Howland T.J."/>
            <person name="Wei M.-H."/>
            <person name="Ibegwam C."/>
            <person name="Jalali M."/>
            <person name="Kalush F."/>
            <person name="Karpen G.H."/>
            <person name="Ke Z."/>
            <person name="Kennison J.A."/>
            <person name="Ketchum K.A."/>
            <person name="Kimmel B.E."/>
            <person name="Kodira C.D."/>
            <person name="Kraft C.L."/>
            <person name="Kravitz S."/>
            <person name="Kulp D."/>
            <person name="Lai Z."/>
            <person name="Lasko P."/>
            <person name="Lei Y."/>
            <person name="Levitsky A.A."/>
            <person name="Li J.H."/>
            <person name="Li Z."/>
            <person name="Liang Y."/>
            <person name="Lin X."/>
            <person name="Liu X."/>
            <person name="Mattei B."/>
            <person name="McIntosh T.C."/>
            <person name="McLeod M.P."/>
            <person name="McPherson D."/>
            <person name="Merkulov G."/>
            <person name="Milshina N.V."/>
            <person name="Mobarry C."/>
            <person name="Morris J."/>
            <person name="Moshrefi A."/>
            <person name="Mount S.M."/>
            <person name="Moy M."/>
            <person name="Murphy B."/>
            <person name="Murphy L."/>
            <person name="Muzny D.M."/>
            <person name="Nelson D.L."/>
            <person name="Nelson D.R."/>
            <person name="Nelson K.A."/>
            <person name="Nixon K."/>
            <person name="Nusskern D.R."/>
            <person name="Pacleb J.M."/>
            <person name="Palazzolo M."/>
            <person name="Pittman G.S."/>
            <person name="Pan S."/>
            <person name="Pollard J."/>
            <person name="Puri V."/>
            <person name="Reese M.G."/>
            <person name="Reinert K."/>
            <person name="Remington K."/>
            <person name="Saunders R.D.C."/>
            <person name="Scheeler F."/>
            <person name="Shen H."/>
            <person name="Shue B.C."/>
            <person name="Siden-Kiamos I."/>
            <person name="Simpson M."/>
            <person name="Skupski M.P."/>
            <person name="Smith T.J."/>
            <person name="Spier E."/>
            <person name="Spradling A.C."/>
            <person name="Stapleton M."/>
            <person name="Strong R."/>
            <person name="Sun E."/>
            <person name="Svirskas R."/>
            <person name="Tector C."/>
            <person name="Turner R."/>
            <person name="Venter E."/>
            <person name="Wang A.H."/>
            <person name="Wang X."/>
            <person name="Wang Z.-Y."/>
            <person name="Wassarman D.A."/>
            <person name="Weinstock G.M."/>
            <person name="Weissenbach J."/>
            <person name="Williams S.M."/>
            <person name="Woodage T."/>
            <person name="Worley K.C."/>
            <person name="Wu D."/>
            <person name="Yang S."/>
            <person name="Yao Q.A."/>
            <person name="Ye J."/>
            <person name="Yeh R.-F."/>
            <person name="Zaveri J.S."/>
            <person name="Zhan M."/>
            <person name="Zhang G."/>
            <person name="Zhao Q."/>
            <person name="Zheng L."/>
            <person name="Zheng X.H."/>
            <person name="Zhong F.N."/>
            <person name="Zhong W."/>
            <person name="Zhou X."/>
            <person name="Zhu S.C."/>
            <person name="Zhu X."/>
            <person name="Smith H.O."/>
            <person name="Gibbs R.A."/>
            <person name="Myers E.W."/>
            <person name="Rubin G.M."/>
            <person name="Venter J.C."/>
        </authorList>
    </citation>
    <scope>NUCLEOTIDE SEQUENCE [LARGE SCALE GENOMIC DNA]</scope>
    <source>
        <strain evidence="11">Berkeley</strain>
    </source>
</reference>
<reference evidence="34 35" key="2">
    <citation type="journal article" date="2002" name="Genome Biol.">
        <title>Annotation of the Drosophila melanogaster euchromatic genome: a systematic review.</title>
        <authorList>
            <person name="Misra S."/>
            <person name="Crosby M.A."/>
            <person name="Mungall C.J."/>
            <person name="Matthews B.B."/>
            <person name="Campbell K.S."/>
            <person name="Hradecky P."/>
            <person name="Huang Y."/>
            <person name="Kaminker J.S."/>
            <person name="Millburn G.H."/>
            <person name="Prochnik S.E."/>
            <person name="Smith C.D."/>
            <person name="Tupy J.L."/>
            <person name="Whitfield E.J."/>
            <person name="Bayraktaroglu L."/>
            <person name="Berman B.P."/>
            <person name="Bettencourt B.R."/>
            <person name="Celniker S.E."/>
            <person name="de Grey A.D.N.J."/>
            <person name="Drysdale R.A."/>
            <person name="Harris N.L."/>
            <person name="Richter J."/>
            <person name="Russo S."/>
            <person name="Schroeder A.J."/>
            <person name="Shu S.Q."/>
            <person name="Stapleton M."/>
            <person name="Yamada C."/>
            <person name="Ashburner M."/>
            <person name="Gelbart W.M."/>
            <person name="Rubin G.M."/>
            <person name="Lewis S.E."/>
        </authorList>
    </citation>
    <scope>GENOME REANNOTATION</scope>
    <source>
        <strain>Berkeley</strain>
    </source>
</reference>
<reference evidence="34 36" key="3">
    <citation type="journal article" date="2002" name="Genome Biol.">
        <title>A Drosophila full-length cDNA resource.</title>
        <authorList>
            <person name="Stapleton M."/>
            <person name="Carlson J.W."/>
            <person name="Brokstein P."/>
            <person name="Yu C."/>
            <person name="Champe M."/>
            <person name="George R.A."/>
            <person name="Guarin H."/>
            <person name="Kronmiller B."/>
            <person name="Pacleb J.M."/>
            <person name="Park S."/>
            <person name="Wan K.H."/>
            <person name="Rubin G.M."/>
            <person name="Celniker S.E."/>
        </authorList>
    </citation>
    <scope>NUCLEOTIDE SEQUENCE [LARGE SCALE MRNA] OF 1338-2249</scope>
    <source>
        <strain evidence="15">Berkeley</strain>
        <tissue evidence="15">Embryo</tissue>
    </source>
</reference>
<reference evidence="34" key="4">
    <citation type="journal article" date="2001" name="Nature">
        <title>Role for a bidentate ribonuclease in the initiation step of RNA interference.</title>
        <authorList>
            <person name="Bernstein E."/>
            <person name="Caudy A.A."/>
            <person name="Hammond S.M."/>
            <person name="Hannon G.J."/>
        </authorList>
    </citation>
    <scope>FUNCTION</scope>
</reference>
<reference evidence="34" key="5">
    <citation type="journal article" date="2001" name="Science">
        <title>Argonaute2, a link between genetic and biochemical analyses of RNAi.</title>
        <authorList>
            <person name="Hammond S.M."/>
            <person name="Boettcher S."/>
            <person name="Caudy A.A."/>
            <person name="Kobayashi R."/>
            <person name="Hannon G.J."/>
        </authorList>
    </citation>
    <scope>FUNCTION</scope>
    <scope>INTERACTION WITH AGO2</scope>
</reference>
<reference evidence="34" key="6">
    <citation type="journal article" date="2002" name="Genes Dev.">
        <title>A Drosophila fragile X protein interacts with components of RNAi and ribosomal proteins.</title>
        <authorList>
            <person name="Ishizuka A."/>
            <person name="Siomi M.C."/>
            <person name="Siomi H."/>
        </authorList>
    </citation>
    <scope>INTERACTION WITH FMR1</scope>
</reference>
<reference key="7">
    <citation type="journal article" date="2004" name="Cell">
        <title>Distinct roles for Drosophila Dicer-1 and Dicer-2 in the siRNA/miRNA silencing pathways.</title>
        <authorList>
            <person name="Lee Y.S."/>
            <person name="Nakahara K."/>
            <person name="Pham J.W."/>
            <person name="Kim K."/>
            <person name="He Z."/>
            <person name="Sontheimer E.J."/>
            <person name="Carthew R.W."/>
        </authorList>
    </citation>
    <scope>FUNCTION</scope>
    <scope>CATALYTIC ACTIVITY</scope>
</reference>
<reference key="8">
    <citation type="journal article" date="2005" name="Genes Dev.">
        <title>Dicer-1 and R3D1-L catalyze microRNA maturation in Drosophila.</title>
        <authorList>
            <person name="Jiang F."/>
            <person name="Ye X."/>
            <person name="Liu X."/>
            <person name="Fincher L."/>
            <person name="McKearin D."/>
            <person name="Liu Q."/>
        </authorList>
    </citation>
    <scope>FUNCTION</scope>
    <scope>INTERACTION WITH LOQS (ISOFORM PB)</scope>
    <scope>SUBCELLULAR LOCATION</scope>
</reference>
<reference key="9">
    <citation type="journal article" date="2005" name="PLoS Biol.">
        <title>Processing of pre-microRNAs by the Dicer-1-Loquacious complex in Drosophila cells.</title>
        <authorList>
            <person name="Saito K."/>
            <person name="Ishizuka A."/>
            <person name="Siomi H."/>
            <person name="Siomi M.C."/>
        </authorList>
    </citation>
    <scope>FUNCTION</scope>
    <scope>CATALYTIC ACTIVITY</scope>
    <scope>COFACTOR</scope>
    <scope>IDENTIFICATION IN THE MIRNA-RISC LOADING COMPLEX</scope>
    <scope>SUBCELLULAR LOCATION</scope>
</reference>
<reference key="10">
    <citation type="journal article" date="2006" name="Curr. Biol.">
        <title>The role of PIWI and the miRNA machinery in Drosophila germline determination.</title>
        <authorList>
            <person name="Megosh H.B."/>
            <person name="Cox D.N."/>
            <person name="Campbell C."/>
            <person name="Lin H."/>
        </authorList>
    </citation>
    <scope>FUNCTION</scope>
    <scope>INTERACTION WITH PIWI AND VAS</scope>
</reference>
<reference key="11">
    <citation type="journal article" date="2007" name="J. Biol. Chem.">
        <title>Functional anatomy of the Drosophila microRNA-generating enzyme.</title>
        <authorList>
            <person name="Ye X."/>
            <person name="Paroo Z."/>
            <person name="Liu Q."/>
        </authorList>
    </citation>
    <scope>FUNCTION</scope>
    <scope>CATALYTIC ACTIVITY</scope>
    <scope>INTERACTION WITH LOQS (ISOFORMS PA; PB AND PC)</scope>
    <scope>DOMAIN</scope>
    <scope>MUTAGENESIS OF ASP-1749; GLU-1908; ASP-2036; GLU-2139 AND 2186-LEU--ASP-2249</scope>
</reference>
<reference key="12">
    <citation type="journal article" date="2007" name="RNA">
        <title>Dicer-1, but not Loquacious, is critical for assembly of miRNA-induced silencing complexes.</title>
        <authorList>
            <person name="Liu X."/>
            <person name="Park J.K."/>
            <person name="Jiang F."/>
            <person name="Liu Y."/>
            <person name="McKearin D."/>
            <person name="Liu Q."/>
        </authorList>
    </citation>
    <scope>FUNCTION</scope>
</reference>
<reference key="13">
    <citation type="journal article" date="2008" name="J. Proteome Res.">
        <title>Phosphoproteome analysis of Drosophila melanogaster embryos.</title>
        <authorList>
            <person name="Zhai B."/>
            <person name="Villen J."/>
            <person name="Beausoleil S.A."/>
            <person name="Mintseris J."/>
            <person name="Gygi S.P."/>
        </authorList>
    </citation>
    <scope>PHOSPHORYLATION [LARGE SCALE ANALYSIS] AT SER-1423; SER-1877 AND SER-1880</scope>
    <scope>IDENTIFICATION BY MASS SPECTROMETRY</scope>
    <source>
        <tissue>Embryo</tissue>
    </source>
</reference>
<reference key="14">
    <citation type="journal article" date="2009" name="RNA">
        <title>Characterization of the miRNA-RISC loading complex and miRNA-RISC formed in the Drosophila miRNA pathway.</title>
        <authorList>
            <person name="Miyoshi K."/>
            <person name="Okada T.N."/>
            <person name="Siomi H."/>
            <person name="Siomi M.C."/>
        </authorList>
    </citation>
    <scope>FUNCTION</scope>
    <scope>IDENTIFICATION IN THE MIRNA-RISC LOADING COMPLEX</scope>
</reference>
<reference key="15">
    <citation type="journal article" date="2009" name="RNA">
        <title>Processing of Drosophila endo-siRNAs depends on a specific Loquacious isoform.</title>
        <authorList>
            <person name="Zhou R."/>
            <person name="Czech B."/>
            <person name="Brennecke J."/>
            <person name="Sachidanandam R."/>
            <person name="Wohlschlegel J.A."/>
            <person name="Perrimon N."/>
            <person name="Hannon G.J."/>
        </authorList>
    </citation>
    <scope>FUNCTION</scope>
    <scope>INTERACTION WITH LOQS (ISOFORMS PA AND PB)</scope>
</reference>
<reference key="16">
    <citation type="journal article" date="2010" name="EMBO J.">
        <title>The miRNA machinery targets Mei-P26 and regulates Myc protein levels in the Drosophila wing.</title>
        <authorList>
            <person name="Herranz H."/>
            <person name="Hong X."/>
            <person name="Perez L."/>
            <person name="Ferreira A."/>
            <person name="Olivieri D."/>
            <person name="Cohen S.M."/>
            <person name="Milan M."/>
        </authorList>
    </citation>
    <scope>FUNCTION</scope>
    <scope>DISRUPTION PHENOTYPE</scope>
</reference>
<reference key="17">
    <citation type="journal article" date="2011" name="Mol. Cell">
        <title>Phosphate and R2D2 restrict the substrate specificity of Dicer-2, an ATP-driven ribonuclease.</title>
        <authorList>
            <person name="Cenik E.S."/>
            <person name="Fukunaga R."/>
            <person name="Lu G."/>
            <person name="Dutcher R."/>
            <person name="Wang Y."/>
            <person name="Tanaka Hall T.M."/>
            <person name="Zamore P.D."/>
        </authorList>
    </citation>
    <scope>FUNCTION</scope>
    <scope>ACTIVITY REGULATION</scope>
</reference>
<reference key="18">
    <citation type="journal article" date="2011" name="Nat. Struct. Mol. Biol.">
        <title>Recognition of the pre-miRNA structure by Drosophila Dicer-1.</title>
        <authorList>
            <person name="Tsutsumi A."/>
            <person name="Kawamata T."/>
            <person name="Izumi N."/>
            <person name="Seitz H."/>
            <person name="Tomari Y."/>
        </authorList>
    </citation>
    <scope>FUNCTION</scope>
    <scope>CATALYTIC ACTIVITY</scope>
    <scope>DOMAIN</scope>
    <scope>MUTAGENESIS OF GLU-1908 AND GLU-2139</scope>
</reference>
<reference key="19">
    <citation type="journal article" date="2012" name="Cell">
        <title>Dicer partner proteins tune the length of mature miRNAs in flies and mammals.</title>
        <authorList>
            <person name="Fukunaga R."/>
            <person name="Han B.W."/>
            <person name="Hung J.H."/>
            <person name="Xu J."/>
            <person name="Weng Z."/>
            <person name="Zamore P.D."/>
        </authorList>
    </citation>
    <scope>FUNCTION</scope>
</reference>
<reference key="20">
    <citation type="journal article" date="2014" name="EMBO J.">
        <title>Inorganic phosphate blocks binding of pre-miRNA to Dicer-2 via its PAZ domain.</title>
        <authorList>
            <person name="Fukunaga R."/>
            <person name="Colpan C."/>
            <person name="Han B.W."/>
            <person name="Zamore P.D."/>
        </authorList>
    </citation>
    <scope>FUNCTION</scope>
    <scope>ACTIVITY REGULATION</scope>
</reference>
<reference evidence="38 39 40 41 42 43" key="21">
    <citation type="journal article" date="2022" name="Mol. Cell">
        <title>Structural basis of microRNA biogenesis by Dicer-1 and its partner protein Loqs-PB.</title>
        <authorList>
            <person name="Jouravleva K."/>
            <person name="Golovenko D."/>
            <person name="Demo G."/>
            <person name="Dutcher R.C."/>
            <person name="Hall T.M.T."/>
            <person name="Zamore P.D."/>
            <person name="Korostelev A.A."/>
        </authorList>
    </citation>
    <scope>STRUCTURE BY ELECTRON MICROSCOPY (3.06 ANGSTROMS) IN COMPLEX WITH LOQS (ISOFORM PB)</scope>
    <scope>FUNCTION</scope>
    <scope>INTERACTION WITH LOQS (ISOFORM PB)</scope>
    <scope>COFACTOR</scope>
    <scope>DOMAIN</scope>
</reference>
<name>DCR1_DROME</name>
<accession>Q9VCU9</accession>
<accession>Q961S7</accession>
<dbReference type="EC" id="3.1.26.3" evidence="16 17 20 27"/>
<dbReference type="EMBL" id="AE014297">
    <property type="protein sequence ID" value="AAF56056.1"/>
    <property type="molecule type" value="Genomic_DNA"/>
</dbReference>
<dbReference type="EMBL" id="AY050230">
    <property type="protein sequence ID" value="AAK84929.1"/>
    <property type="status" value="ALT_INIT"/>
    <property type="molecule type" value="mRNA"/>
</dbReference>
<dbReference type="RefSeq" id="NP_524453.1">
    <property type="nucleotide sequence ID" value="NM_079729.3"/>
</dbReference>
<dbReference type="PDB" id="8DFV">
    <property type="method" value="EM"/>
    <property type="resolution" value="3.06 A"/>
    <property type="chains" value="A=1-2249"/>
</dbReference>
<dbReference type="PDB" id="8DG5">
    <property type="method" value="EM"/>
    <property type="resolution" value="3.26 A"/>
    <property type="chains" value="A=1-2249"/>
</dbReference>
<dbReference type="PDB" id="8DG7">
    <property type="method" value="EM"/>
    <property type="resolution" value="3.32 A"/>
    <property type="chains" value="A=1-2249"/>
</dbReference>
<dbReference type="PDB" id="8DGA">
    <property type="method" value="EM"/>
    <property type="resolution" value="3.73 A"/>
    <property type="chains" value="A=1-2249"/>
</dbReference>
<dbReference type="PDB" id="8DGI">
    <property type="method" value="EM"/>
    <property type="resolution" value="3.94 A"/>
    <property type="chains" value="A=1-2249"/>
</dbReference>
<dbReference type="PDB" id="8DGJ">
    <property type="method" value="EM"/>
    <property type="resolution" value="4.02 A"/>
    <property type="chains" value="A=1-2249"/>
</dbReference>
<dbReference type="PDBsum" id="8DFV"/>
<dbReference type="PDBsum" id="8DG5"/>
<dbReference type="PDBsum" id="8DG7"/>
<dbReference type="PDBsum" id="8DGA"/>
<dbReference type="PDBsum" id="8DGI"/>
<dbReference type="PDBsum" id="8DGJ"/>
<dbReference type="EMDB" id="EMD-27415"/>
<dbReference type="EMDB" id="EMD-27416"/>
<dbReference type="EMDB" id="EMD-27417"/>
<dbReference type="EMDB" id="EMD-27420"/>
<dbReference type="EMDB" id="EMD-27423"/>
<dbReference type="EMDB" id="EMD-27427"/>
<dbReference type="EMDB" id="EMD-7292"/>
<dbReference type="SMR" id="Q9VCU9"/>
<dbReference type="BioGRID" id="67642">
    <property type="interactions" value="24"/>
</dbReference>
<dbReference type="ComplexPortal" id="CPX-2737">
    <property type="entry name" value="miRNA RISC-loading complex"/>
</dbReference>
<dbReference type="DIP" id="DIP-23028N"/>
<dbReference type="FunCoup" id="Q9VCU9">
    <property type="interactions" value="852"/>
</dbReference>
<dbReference type="IntAct" id="Q9VCU9">
    <property type="interactions" value="9"/>
</dbReference>
<dbReference type="STRING" id="7227.FBpp0083717"/>
<dbReference type="GlyGen" id="Q9VCU9">
    <property type="glycosylation" value="4 sites"/>
</dbReference>
<dbReference type="iPTMnet" id="Q9VCU9"/>
<dbReference type="PaxDb" id="7227-FBpp0083717"/>
<dbReference type="EnsemblMetazoa" id="FBtr0084324">
    <property type="protein sequence ID" value="FBpp0083717"/>
    <property type="gene ID" value="FBgn0039016"/>
</dbReference>
<dbReference type="GeneID" id="42693"/>
<dbReference type="KEGG" id="dme:Dmel_CG4792"/>
<dbReference type="UCSC" id="CG4792-RA">
    <property type="organism name" value="d. melanogaster"/>
</dbReference>
<dbReference type="AGR" id="FB:FBgn0039016"/>
<dbReference type="CTD" id="42693"/>
<dbReference type="FlyBase" id="FBgn0039016">
    <property type="gene designation" value="Dcr-1"/>
</dbReference>
<dbReference type="VEuPathDB" id="VectorBase:FBgn0039016"/>
<dbReference type="eggNOG" id="KOG0701">
    <property type="taxonomic scope" value="Eukaryota"/>
</dbReference>
<dbReference type="GeneTree" id="ENSGT00940000156287"/>
<dbReference type="HOGENOM" id="CLU_000907_4_4_1"/>
<dbReference type="InParanoid" id="Q9VCU9"/>
<dbReference type="OMA" id="CGFHKYF"/>
<dbReference type="OrthoDB" id="2392202at2759"/>
<dbReference type="PhylomeDB" id="Q9VCU9"/>
<dbReference type="Reactome" id="R-DME-203927">
    <property type="pathway name" value="MicroRNA (miRNA) biogenesis"/>
</dbReference>
<dbReference type="Reactome" id="R-DME-426486">
    <property type="pathway name" value="Small interfering RNA (siRNA) biogenesis"/>
</dbReference>
<dbReference type="SignaLink" id="Q9VCU9"/>
<dbReference type="BioGRID-ORCS" id="42693">
    <property type="hits" value="0 hits in 1 CRISPR screen"/>
</dbReference>
<dbReference type="GenomeRNAi" id="42693"/>
<dbReference type="PRO" id="PR:Q9VCU9"/>
<dbReference type="Proteomes" id="UP000000803">
    <property type="component" value="Chromosome 3R"/>
</dbReference>
<dbReference type="Bgee" id="FBgn0039016">
    <property type="expression patterns" value="Expressed in eye disc (Drosophila) and 28 other cell types or tissues"/>
</dbReference>
<dbReference type="ExpressionAtlas" id="Q9VCU9">
    <property type="expression patterns" value="baseline and differential"/>
</dbReference>
<dbReference type="GO" id="GO:0005737">
    <property type="term" value="C:cytoplasm"/>
    <property type="evidence" value="ECO:0000314"/>
    <property type="project" value="FlyBase"/>
</dbReference>
<dbReference type="GO" id="GO:0005829">
    <property type="term" value="C:cytosol"/>
    <property type="evidence" value="ECO:0000314"/>
    <property type="project" value="UniProtKB"/>
</dbReference>
<dbReference type="GO" id="GO:0005634">
    <property type="term" value="C:nucleus"/>
    <property type="evidence" value="ECO:0000314"/>
    <property type="project" value="FlyBase"/>
</dbReference>
<dbReference type="GO" id="GO:0016442">
    <property type="term" value="C:RISC complex"/>
    <property type="evidence" value="ECO:0000250"/>
    <property type="project" value="UniProtKB"/>
</dbReference>
<dbReference type="GO" id="GO:0070578">
    <property type="term" value="C:RISC-loading complex"/>
    <property type="evidence" value="ECO:0000314"/>
    <property type="project" value="UniProtKB"/>
</dbReference>
<dbReference type="GO" id="GO:0005524">
    <property type="term" value="F:ATP binding"/>
    <property type="evidence" value="ECO:0007669"/>
    <property type="project" value="UniProtKB-KW"/>
</dbReference>
<dbReference type="GO" id="GO:0004530">
    <property type="term" value="F:deoxyribonuclease I activity"/>
    <property type="evidence" value="ECO:0000318"/>
    <property type="project" value="GO_Central"/>
</dbReference>
<dbReference type="GO" id="GO:0004386">
    <property type="term" value="F:helicase activity"/>
    <property type="evidence" value="ECO:0007669"/>
    <property type="project" value="UniProtKB-KW"/>
</dbReference>
<dbReference type="GO" id="GO:0046872">
    <property type="term" value="F:metal ion binding"/>
    <property type="evidence" value="ECO:0007669"/>
    <property type="project" value="UniProtKB-KW"/>
</dbReference>
<dbReference type="GO" id="GO:0070883">
    <property type="term" value="F:pre-miRNA binding"/>
    <property type="evidence" value="ECO:0000314"/>
    <property type="project" value="FlyBase"/>
</dbReference>
<dbReference type="GO" id="GO:0004525">
    <property type="term" value="F:ribonuclease III activity"/>
    <property type="evidence" value="ECO:0000314"/>
    <property type="project" value="FlyBase"/>
</dbReference>
<dbReference type="GO" id="GO:0003723">
    <property type="term" value="F:RNA binding"/>
    <property type="evidence" value="ECO:0000318"/>
    <property type="project" value="GO_Central"/>
</dbReference>
<dbReference type="GO" id="GO:0004521">
    <property type="term" value="F:RNA endonuclease activity"/>
    <property type="evidence" value="ECO:0000314"/>
    <property type="project" value="FlyBase"/>
</dbReference>
<dbReference type="GO" id="GO:0003727">
    <property type="term" value="F:single-stranded RNA binding"/>
    <property type="evidence" value="ECO:0000314"/>
    <property type="project" value="FlyBase"/>
</dbReference>
<dbReference type="GO" id="GO:0006309">
    <property type="term" value="P:apoptotic DNA fragmentation"/>
    <property type="evidence" value="ECO:0000318"/>
    <property type="project" value="GO_Central"/>
</dbReference>
<dbReference type="GO" id="GO:0048813">
    <property type="term" value="P:dendrite morphogenesis"/>
    <property type="evidence" value="ECO:0000315"/>
    <property type="project" value="FlyBase"/>
</dbReference>
<dbReference type="GO" id="GO:0042078">
    <property type="term" value="P:germ-line stem cell division"/>
    <property type="evidence" value="ECO:0000315"/>
    <property type="project" value="FlyBase"/>
</dbReference>
<dbReference type="GO" id="GO:0030727">
    <property type="term" value="P:germarium-derived female germ-line cyst formation"/>
    <property type="evidence" value="ECO:0000315"/>
    <property type="project" value="FlyBase"/>
</dbReference>
<dbReference type="GO" id="GO:0007294">
    <property type="term" value="P:germarium-derived oocyte fate determination"/>
    <property type="evidence" value="ECO:0000315"/>
    <property type="project" value="FlyBase"/>
</dbReference>
<dbReference type="GO" id="GO:0035196">
    <property type="term" value="P:miRNA processing"/>
    <property type="evidence" value="ECO:0000315"/>
    <property type="project" value="FlyBase"/>
</dbReference>
<dbReference type="GO" id="GO:0045448">
    <property type="term" value="P:mitotic cell cycle, embryonic"/>
    <property type="evidence" value="ECO:0000315"/>
    <property type="project" value="FlyBase"/>
</dbReference>
<dbReference type="GO" id="GO:0007279">
    <property type="term" value="P:pole cell formation"/>
    <property type="evidence" value="ECO:0000315"/>
    <property type="project" value="FlyBase"/>
</dbReference>
<dbReference type="GO" id="GO:0031054">
    <property type="term" value="P:pre-miRNA processing"/>
    <property type="evidence" value="ECO:0000314"/>
    <property type="project" value="FlyBase"/>
</dbReference>
<dbReference type="GO" id="GO:0035194">
    <property type="term" value="P:regulatory ncRNA-mediated post-transcriptional gene silencing"/>
    <property type="evidence" value="ECO:0000315"/>
    <property type="project" value="FlyBase"/>
</dbReference>
<dbReference type="GO" id="GO:0042594">
    <property type="term" value="P:response to starvation"/>
    <property type="evidence" value="ECO:0000315"/>
    <property type="project" value="FlyBase"/>
</dbReference>
<dbReference type="GO" id="GO:0070922">
    <property type="term" value="P:RISC complex assembly"/>
    <property type="evidence" value="ECO:0000315"/>
    <property type="project" value="FlyBase"/>
</dbReference>
<dbReference type="GO" id="GO:0007367">
    <property type="term" value="P:segment polarity determination"/>
    <property type="evidence" value="ECO:0000316"/>
    <property type="project" value="FlyBase"/>
</dbReference>
<dbReference type="GO" id="GO:0030422">
    <property type="term" value="P:siRNA processing"/>
    <property type="evidence" value="ECO:0000314"/>
    <property type="project" value="UniProtKB"/>
</dbReference>
<dbReference type="CDD" id="cd15903">
    <property type="entry name" value="Dicer_PBD"/>
    <property type="match status" value="1"/>
</dbReference>
<dbReference type="CDD" id="cd10843">
    <property type="entry name" value="DSRM_DICER"/>
    <property type="match status" value="1"/>
</dbReference>
<dbReference type="CDD" id="cd02843">
    <property type="entry name" value="PAZ_dicer_like"/>
    <property type="match status" value="1"/>
</dbReference>
<dbReference type="CDD" id="cd00593">
    <property type="entry name" value="RIBOc"/>
    <property type="match status" value="2"/>
</dbReference>
<dbReference type="FunFam" id="3.40.50.300:FF:002580">
    <property type="entry name" value="AGAP002836-PB"/>
    <property type="match status" value="1"/>
</dbReference>
<dbReference type="FunFam" id="3.30.160.380:FF:000003">
    <property type="entry name" value="Endoribonuclease dcr-1"/>
    <property type="match status" value="1"/>
</dbReference>
<dbReference type="FunFam" id="3.30.160.20:FF:000015">
    <property type="entry name" value="endoribonuclease Dicer"/>
    <property type="match status" value="1"/>
</dbReference>
<dbReference type="FunFam" id="2.170.260.10:FF:000002">
    <property type="entry name" value="Putative Endoribonuclease Dicer"/>
    <property type="match status" value="1"/>
</dbReference>
<dbReference type="FunFam" id="1.10.1520.10:FF:000005">
    <property type="entry name" value="Putative endoribonuclease dicer"/>
    <property type="match status" value="1"/>
</dbReference>
<dbReference type="Gene3D" id="3.30.160.20">
    <property type="match status" value="1"/>
</dbReference>
<dbReference type="Gene3D" id="3.30.160.380">
    <property type="entry name" value="Dicer dimerisation domain"/>
    <property type="match status" value="1"/>
</dbReference>
<dbReference type="Gene3D" id="3.40.50.300">
    <property type="entry name" value="P-loop containing nucleotide triphosphate hydrolases"/>
    <property type="match status" value="2"/>
</dbReference>
<dbReference type="Gene3D" id="2.170.260.10">
    <property type="entry name" value="paz domain"/>
    <property type="match status" value="1"/>
</dbReference>
<dbReference type="Gene3D" id="1.10.1520.10">
    <property type="entry name" value="Ribonuclease III domain"/>
    <property type="match status" value="2"/>
</dbReference>
<dbReference type="InterPro" id="IPR038248">
    <property type="entry name" value="Dicer_dimer_sf"/>
</dbReference>
<dbReference type="InterPro" id="IPR005034">
    <property type="entry name" value="Dicer_dimerisation_dom"/>
</dbReference>
<dbReference type="InterPro" id="IPR044441">
    <property type="entry name" value="DICER_DSRM"/>
</dbReference>
<dbReference type="InterPro" id="IPR048513">
    <property type="entry name" value="Dicer_PBD"/>
</dbReference>
<dbReference type="InterPro" id="IPR048512">
    <property type="entry name" value="Dicer_platform"/>
</dbReference>
<dbReference type="InterPro" id="IPR014720">
    <property type="entry name" value="dsRBD_dom"/>
</dbReference>
<dbReference type="InterPro" id="IPR001650">
    <property type="entry name" value="Helicase_C-like"/>
</dbReference>
<dbReference type="InterPro" id="IPR027417">
    <property type="entry name" value="P-loop_NTPase"/>
</dbReference>
<dbReference type="InterPro" id="IPR003100">
    <property type="entry name" value="PAZ_dom"/>
</dbReference>
<dbReference type="InterPro" id="IPR036085">
    <property type="entry name" value="PAZ_dom_sf"/>
</dbReference>
<dbReference type="InterPro" id="IPR000999">
    <property type="entry name" value="RNase_III_dom"/>
</dbReference>
<dbReference type="InterPro" id="IPR036389">
    <property type="entry name" value="RNase_III_sf"/>
</dbReference>
<dbReference type="PANTHER" id="PTHR14950">
    <property type="entry name" value="DICER-RELATED"/>
    <property type="match status" value="1"/>
</dbReference>
<dbReference type="PANTHER" id="PTHR14950:SF37">
    <property type="entry name" value="ENDORIBONUCLEASE DICER"/>
    <property type="match status" value="1"/>
</dbReference>
<dbReference type="Pfam" id="PF03368">
    <property type="entry name" value="Dicer_dimer"/>
    <property type="match status" value="1"/>
</dbReference>
<dbReference type="Pfam" id="PF20932">
    <property type="entry name" value="Dicer_dsRBD"/>
    <property type="match status" value="1"/>
</dbReference>
<dbReference type="Pfam" id="PF20930">
    <property type="entry name" value="Dicer_PBD"/>
    <property type="match status" value="1"/>
</dbReference>
<dbReference type="Pfam" id="PF20931">
    <property type="entry name" value="Dicer_platform"/>
    <property type="match status" value="1"/>
</dbReference>
<dbReference type="Pfam" id="PF00271">
    <property type="entry name" value="Helicase_C"/>
    <property type="match status" value="1"/>
</dbReference>
<dbReference type="Pfam" id="PF02170">
    <property type="entry name" value="PAZ"/>
    <property type="match status" value="1"/>
</dbReference>
<dbReference type="Pfam" id="PF00636">
    <property type="entry name" value="Ribonuclease_3"/>
    <property type="match status" value="2"/>
</dbReference>
<dbReference type="SMART" id="SM00490">
    <property type="entry name" value="HELICc"/>
    <property type="match status" value="1"/>
</dbReference>
<dbReference type="SMART" id="SM00949">
    <property type="entry name" value="PAZ"/>
    <property type="match status" value="1"/>
</dbReference>
<dbReference type="SMART" id="SM00535">
    <property type="entry name" value="RIBOc"/>
    <property type="match status" value="2"/>
</dbReference>
<dbReference type="SUPFAM" id="SSF54768">
    <property type="entry name" value="dsRNA-binding domain-like"/>
    <property type="match status" value="1"/>
</dbReference>
<dbReference type="SUPFAM" id="SSF52540">
    <property type="entry name" value="P-loop containing nucleoside triphosphate hydrolases"/>
    <property type="match status" value="1"/>
</dbReference>
<dbReference type="SUPFAM" id="SSF101690">
    <property type="entry name" value="PAZ domain"/>
    <property type="match status" value="1"/>
</dbReference>
<dbReference type="SUPFAM" id="SSF69065">
    <property type="entry name" value="RNase III domain-like"/>
    <property type="match status" value="2"/>
</dbReference>
<dbReference type="PROSITE" id="PS51327">
    <property type="entry name" value="DICER_DSRBF"/>
    <property type="match status" value="1"/>
</dbReference>
<dbReference type="PROSITE" id="PS50137">
    <property type="entry name" value="DS_RBD"/>
    <property type="match status" value="1"/>
</dbReference>
<dbReference type="PROSITE" id="PS51194">
    <property type="entry name" value="HELICASE_CTER"/>
    <property type="match status" value="1"/>
</dbReference>
<dbReference type="PROSITE" id="PS50821">
    <property type="entry name" value="PAZ"/>
    <property type="match status" value="1"/>
</dbReference>
<dbReference type="PROSITE" id="PS00517">
    <property type="entry name" value="RNASE_3_1"/>
    <property type="match status" value="1"/>
</dbReference>
<dbReference type="PROSITE" id="PS50142">
    <property type="entry name" value="RNASE_3_2"/>
    <property type="match status" value="2"/>
</dbReference>
<organism>
    <name type="scientific">Drosophila melanogaster</name>
    <name type="common">Fruit fly</name>
    <dbReference type="NCBI Taxonomy" id="7227"/>
    <lineage>
        <taxon>Eukaryota</taxon>
        <taxon>Metazoa</taxon>
        <taxon>Ecdysozoa</taxon>
        <taxon>Arthropoda</taxon>
        <taxon>Hexapoda</taxon>
        <taxon>Insecta</taxon>
        <taxon>Pterygota</taxon>
        <taxon>Neoptera</taxon>
        <taxon>Endopterygota</taxon>
        <taxon>Diptera</taxon>
        <taxon>Brachycera</taxon>
        <taxon>Muscomorpha</taxon>
        <taxon>Ephydroidea</taxon>
        <taxon>Drosophilidae</taxon>
        <taxon>Drosophila</taxon>
        <taxon>Sophophora</taxon>
    </lineage>
</organism>
<sequence>MAFHWCDNNLHTTVFTPRDFQVELLATAYERNTIICLGHRSSKEFIALKLLQELSRRARRHGRVSVYLSCEVGTSTEPCSIYTMLTHLTDLRVWQEQPDMQIPFDHCWTDYHVSILRPEGFLYLLETRELLLSSVELIVLEDCHDSAVYQRIRPLFENHIMPAPPADRPRILGLAGPLHSAGCELQQLSAMLATLEQSVLCQIETASDIVTVLRYCSRPHEYIVQCAPFEMDELSLVLADVLNTHKSFLLDHRYDPYEIYGTDQFMDELKDIPDPKVDPLNVINSLLVVLHEMGPWCTQRAAHHFYQCNEKLKVKTPHERHYLLYCLVSTALIQLYSLCEHAFHRHLGSGSDSRQTIERYSSPKVRRLLQTLRCFKPEEVHTQADGLRRMRHQVDQADFNRLSHTLESKCRMVDQMDQPPTETRALVATLEQILHTTEDRQTNRSAARVTPTPTPAHAKPKPSSGANTAQPRTRRRVYTRRHHRDHNDGSDTLCALIYCNQNHTARVLFELLAEISRRDPDLKFLRCQYTTDRVADPTTEPKEAELEHRRQEEVLKRFRMHDCNVLIGTSVLEEGIDVPKCNLVVRWDPPTTYRSYVQCKGRARAAPAYHVILVAPSYKSPTVGSVQLTDRSHRYICATGDTTEADSDSDDSAMPNSSGSDPYTFGTARGTVKILNPEVFSKQPPTACDIKLQEIQDELPAAAQLDTSNSSDEAVSMSNTSPSESSTEQKSRRFQCELSSLTEPEDTSDTTAEIDTAHSLASTTKDLVHQMAQYREIEQMLLSKCANTEPPEQEQSEAERFSACLAAYRPKPHLLTGASVDLGSAIALVNKYCARLPSDTFTKLTALWRCTRNERAGVTLFQYTLRLPINSPLKHDIVGLPMPTQTLARRLAALQACVELHRIGELDDQLQPIGKEGFRALEPDWECFELEPEDEQIVQLSDEPRPGTTKRRQYYYKRIASEFCDCRPVAGAPCYLYFIQLTLQCPIPEEQNTRGRKIYPPEDAQQGFGILTTKRIPKLSAFSIFTRSGEVKVSLELAKERVILTSEQIVCINGFLNYTFTNVLRLQKFLMLFDPDSTENCVFIVPTVKAPAGGKHIDWQFLELIQANGNTMPRAVPDEERQAQPFDPQRFQDAVVMPWYRNQDQPQYFYVAEICPHLSPLSCFPGDNYRTFKHYYLVKYGLTIQNTSQPLLDVDHTSARLNFLTPRYVNRKGVALPTSSEETKRAKRENLEQKQILVPELCTVHPFPASLWRTAVCLPCILYRINGLLLADDIRKQVSADLGLGRQQIEDEDFEWPMLDFGWSLSEVLKKSRESKQKESLKDDTINGKDLADVEKKPTSEETQLDKDSKDDKVEKSAIELIIEGEEKLQEADDFIEIGTWSNDMADDIASFNQEDDDEDDAFHLPVLPANVKFCDQQTRYGSPTFWDVSNGESGFKGPKSSQNKQGGKGKAKGPAKPTFNYYDSDNSLGSSYDDDDNAGPLNYMHHNYSSDDDDVADDIDAGRIAFTSKNEAETIETAQEVEKRQKQLSIIQATNANERQYQQTKNLLIGFNFKHEDQKEPATIRYEESIAKLKTEIESGGMLVPHDQQLVLKRSDAAEAQVAKVSMMELLKQLLPYVNEDVLAKKLGDRRELLLSDLVELNADWVARHEQETYNVMGCGDSFDNYNDHHRLNLDEKQLKLQYERIEIEPPTSTKAITSAILPAGFSFDRQPDLVGHPGPSPSIILQALTMSNANDGINLERLETIGDSFLKYAITTYLYITYENVHEGKLSHLRSKQVANLNLYRLGRRKRLGEYMIATKFEPHDNWLPPCYYVPKELEKALIEAKIPTHHWKLADLLDIKNLSSVQICEMVREKADALGLEQNGGAQNGQLDDSNDSCNDFSCFIPYNLVSQHSIPDKSIADCVEALIGAYLIECGPRGALLFMAWLGVRVLPITRQLDGGNQEQRIPGSTKPNAENVVTVYGAWPTPRSPLLHFAPNATEELDQLLSGFEEFEESLGYKFRDRSYLLQAMTHASYTPNRLTDCYQRLEFLGDAVLDYLITRHLYEDPRQHSPGALTDLRSALVNNTIFASLAVRHGFHKFFRHLSPGLNDVIDRFVRIQQENGHCISEEYYLLSEEECDDAEDVEVPKALGDVFESIAGAIFLDSNMSLDVVWHVYSNMMSPEIEQFSNSVPKSPIRELLELEPETAKFGKPEKLADGRRVRVTVDVFCKGTFRGIGRNYRIAKCTAAKCALRQLKKQGLIAKKD</sequence>
<feature type="chain" id="PRO_0000180474" description="Endoribonuclease Dcr-1">
    <location>
        <begin position="1"/>
        <end position="2249"/>
    </location>
</feature>
<feature type="domain" description="Helicase C-terminal" evidence="8">
    <location>
        <begin position="485"/>
        <end position="648"/>
    </location>
</feature>
<feature type="domain" description="Dicer dsRNA-binding fold" evidence="9">
    <location>
        <begin position="825"/>
        <end position="920"/>
    </location>
</feature>
<feature type="domain" description="PAZ" evidence="5">
    <location>
        <begin position="1100"/>
        <end position="1246"/>
    </location>
</feature>
<feature type="domain" description="RNase III 1" evidence="6">
    <location>
        <begin position="1698"/>
        <end position="1919"/>
    </location>
</feature>
<feature type="domain" description="RNase III 2" evidence="6">
    <location>
        <begin position="1993"/>
        <end position="2150"/>
    </location>
</feature>
<feature type="domain" description="DRBM" evidence="7">
    <location>
        <begin position="2175"/>
        <end position="2241"/>
    </location>
</feature>
<feature type="region of interest" description="Necessary for processing certain pre-miRNas, such as pre-let 7 and pre-bantam" evidence="20">
    <location>
        <begin position="1"/>
        <end position="1042"/>
    </location>
</feature>
<feature type="region of interest" description="Helicase domain" evidence="2">
    <location>
        <begin position="1"/>
        <end position="761"/>
    </location>
</feature>
<feature type="region of interest" description="Important for interaction with loqs isoform PB (loqs-PB)" evidence="20">
    <location>
        <begin position="1"/>
        <end position="690"/>
    </location>
</feature>
<feature type="region of interest" description="Essential for miRNA substrate recognition" evidence="27">
    <location>
        <begin position="1"/>
        <end position="371"/>
    </location>
</feature>
<feature type="region of interest" description="Dispensable for activity and substrate recognition" evidence="27">
    <location>
        <begin position="371"/>
        <end position="491"/>
    </location>
</feature>
<feature type="region of interest" description="Disordered" evidence="10">
    <location>
        <begin position="436"/>
        <end position="486"/>
    </location>
</feature>
<feature type="region of interest" description="Essential for miRNA substrate recognition" evidence="27">
    <location>
        <begin position="496"/>
        <end position="606"/>
    </location>
</feature>
<feature type="region of interest" description="Dispensable for activity and substrate recognition" evidence="27">
    <location>
        <begin position="617"/>
        <end position="761"/>
    </location>
</feature>
<feature type="region of interest" description="Disordered" evidence="10">
    <location>
        <begin position="640"/>
        <end position="665"/>
    </location>
</feature>
<feature type="region of interest" description="Disordered" evidence="10">
    <location>
        <begin position="705"/>
        <end position="757"/>
    </location>
</feature>
<feature type="region of interest" description="Wing domain" evidence="30">
    <location>
        <begin position="924"/>
        <end position="957"/>
    </location>
</feature>
<feature type="region of interest" description="Platform domain" evidence="2">
    <location>
        <begin position="963"/>
        <end position="1108"/>
    </location>
</feature>
<feature type="region of interest" description="Essential for production of mature miRNAs from pre-miRNAs. Also important for proper formation of the siRISC complex but is dispensable for biogenesis of siRNAs" evidence="16">
    <location>
        <begin position="1147"/>
        <end position="2249"/>
    </location>
</feature>
<feature type="region of interest" description="Disordered" evidence="10">
    <location>
        <begin position="1314"/>
        <end position="1351"/>
    </location>
</feature>
<feature type="region of interest" description="Disordered" evidence="10">
    <location>
        <begin position="1426"/>
        <end position="1477"/>
    </location>
</feature>
<feature type="compositionally biased region" description="Basic residues" evidence="10">
    <location>
        <begin position="472"/>
        <end position="484"/>
    </location>
</feature>
<feature type="compositionally biased region" description="Low complexity" evidence="10">
    <location>
        <begin position="716"/>
        <end position="726"/>
    </location>
</feature>
<feature type="compositionally biased region" description="Low complexity" evidence="10">
    <location>
        <begin position="1437"/>
        <end position="1446"/>
    </location>
</feature>
<feature type="compositionally biased region" description="Polar residues" evidence="10">
    <location>
        <begin position="1462"/>
        <end position="1471"/>
    </location>
</feature>
<feature type="binding site" evidence="4">
    <location>
        <begin position="37"/>
        <end position="44"/>
    </location>
    <ligand>
        <name>ATP</name>
        <dbReference type="ChEBI" id="CHEBI:30616"/>
    </ligand>
</feature>
<feature type="binding site" evidence="30 40">
    <location>
        <position position="1745"/>
    </location>
    <ligand>
        <name>Mg(2+)</name>
        <dbReference type="ChEBI" id="CHEBI:18420"/>
        <label>1</label>
    </ligand>
</feature>
<feature type="binding site" evidence="30 39 40">
    <location>
        <position position="1749"/>
    </location>
    <ligand>
        <name>Mg(2+)</name>
        <dbReference type="ChEBI" id="CHEBI:18420"/>
        <label>2</label>
    </ligand>
</feature>
<feature type="binding site" evidence="30 40">
    <location>
        <position position="1905"/>
    </location>
    <ligand>
        <name>Mg(2+)</name>
        <dbReference type="ChEBI" id="CHEBI:18420"/>
        <label>1</label>
    </ligand>
</feature>
<feature type="binding site" evidence="30 40">
    <location>
        <position position="1908"/>
    </location>
    <ligand>
        <name>Mg(2+)</name>
        <dbReference type="ChEBI" id="CHEBI:18420"/>
        <label>1</label>
    </ligand>
</feature>
<feature type="binding site" evidence="30 40">
    <location>
        <position position="1908"/>
    </location>
    <ligand>
        <name>Mg(2+)</name>
        <dbReference type="ChEBI" id="CHEBI:18420"/>
        <label>2</label>
    </ligand>
</feature>
<feature type="binding site" evidence="3">
    <location>
        <position position="2032"/>
    </location>
    <ligand>
        <name>Mg(2+)</name>
        <dbReference type="ChEBI" id="CHEBI:18420"/>
        <label>2</label>
    </ligand>
</feature>
<feature type="binding site" evidence="3">
    <location>
        <position position="2136"/>
    </location>
    <ligand>
        <name>Mg(2+)</name>
        <dbReference type="ChEBI" id="CHEBI:18420"/>
        <label>2</label>
    </ligand>
</feature>
<feature type="binding site" evidence="3">
    <location>
        <position position="2139"/>
    </location>
    <ligand>
        <name>Mg(2+)</name>
        <dbReference type="ChEBI" id="CHEBI:18420"/>
        <label>2</label>
    </ligand>
</feature>
<feature type="site" description="Important for activity" evidence="1">
    <location>
        <position position="2132"/>
    </location>
</feature>
<feature type="modified residue" description="Phosphoserine" evidence="22">
    <location>
        <position position="1423"/>
    </location>
</feature>
<feature type="modified residue" description="Phosphoserine" evidence="22">
    <location>
        <position position="1877"/>
    </location>
</feature>
<feature type="modified residue" description="Phosphoserine" evidence="22">
    <location>
        <position position="1880"/>
    </location>
</feature>
<feature type="mutagenesis site" description="Cleaves the 5' (top) strand but not the 3' (bottom) strand of pre-miRNA." evidence="20">
    <original>D</original>
    <variation>A</variation>
    <location>
        <position position="1749"/>
    </location>
</feature>
<feature type="mutagenesis site" description="Cleaves the 5' (top) strand but not the 3' (bottom) strand of pre-miRNA. Abolishes cleavage of pre-miRNA; when associated with A-2139." evidence="20 27">
    <original>E</original>
    <variation>A</variation>
    <location>
        <position position="1908"/>
    </location>
</feature>
<feature type="mutagenesis site" description="Cleaves the 3' (bottom) strand but not the 5' (top) strand of pre-miRNA." evidence="20">
    <original>D</original>
    <variation>A</variation>
    <location>
        <position position="2036"/>
    </location>
</feature>
<feature type="mutagenesis site" description="Cleaves the 3' (bottom) strand but not the 5' (top) strand of pre-miRNA. Abolishes cleavage of pre-miRNA; when associated with A-1908." evidence="20 27">
    <original>E</original>
    <variation>A</variation>
    <location>
        <position position="2139"/>
    </location>
</feature>
<feature type="mutagenesis site" description="No effect on processing of the pre-miRNas, pre-let 7 and pre-bantam." evidence="20">
    <location>
        <begin position="2186"/>
        <end position="2249"/>
    </location>
</feature>
<feature type="sequence conflict" description="In Ref. 3." evidence="34" ref="3">
    <original>PT</original>
    <variation>AI</variation>
    <location>
        <begin position="1338"/>
        <end position="1339"/>
    </location>
</feature>
<feature type="sequence conflict" description="In Ref. 3." evidence="34" ref="3">
    <original>L</original>
    <variation>I</variation>
    <location>
        <position position="1345"/>
    </location>
</feature>
<feature type="strand" evidence="44">
    <location>
        <begin position="12"/>
        <end position="14"/>
    </location>
</feature>
<feature type="helix" evidence="44">
    <location>
        <begin position="20"/>
        <end position="30"/>
    </location>
</feature>
<feature type="helix" evidence="44">
    <location>
        <begin position="40"/>
        <end position="58"/>
    </location>
</feature>
<feature type="turn" evidence="44">
    <location>
        <begin position="59"/>
        <end position="61"/>
    </location>
</feature>
<feature type="strand" evidence="44">
    <location>
        <begin position="64"/>
        <end position="68"/>
    </location>
</feature>
<feature type="strand" evidence="44">
    <location>
        <begin position="73"/>
        <end position="77"/>
    </location>
</feature>
<feature type="helix" evidence="44">
    <location>
        <begin position="80"/>
        <end position="87"/>
    </location>
</feature>
<feature type="strand" evidence="44">
    <location>
        <begin position="88"/>
        <end position="91"/>
    </location>
</feature>
<feature type="helix" evidence="44">
    <location>
        <begin position="108"/>
        <end position="110"/>
    </location>
</feature>
<feature type="helix" evidence="44">
    <location>
        <begin position="118"/>
        <end position="126"/>
    </location>
</feature>
<feature type="turn" evidence="44">
    <location>
        <begin position="132"/>
        <end position="134"/>
    </location>
</feature>
<feature type="strand" evidence="44">
    <location>
        <begin position="135"/>
        <end position="138"/>
    </location>
</feature>
<feature type="helix" evidence="44">
    <location>
        <begin position="146"/>
        <end position="156"/>
    </location>
</feature>
<feature type="turn" evidence="44">
    <location>
        <begin position="157"/>
        <end position="162"/>
    </location>
</feature>
<feature type="turn" evidence="44">
    <location>
        <begin position="165"/>
        <end position="167"/>
    </location>
</feature>
<feature type="strand" evidence="45">
    <location>
        <begin position="178"/>
        <end position="183"/>
    </location>
</feature>
<feature type="turn" evidence="44">
    <location>
        <begin position="184"/>
        <end position="187"/>
    </location>
</feature>
<feature type="helix" evidence="44">
    <location>
        <begin position="188"/>
        <end position="198"/>
    </location>
</feature>
<feature type="helix" evidence="44">
    <location>
        <begin position="208"/>
        <end position="214"/>
    </location>
</feature>
<feature type="strand" evidence="45">
    <location>
        <begin position="220"/>
        <end position="225"/>
    </location>
</feature>
<feature type="helix" evidence="44">
    <location>
        <begin position="233"/>
        <end position="251"/>
    </location>
</feature>
<feature type="helix" evidence="44">
    <location>
        <begin position="279"/>
        <end position="292"/>
    </location>
</feature>
<feature type="helix" evidence="44">
    <location>
        <begin position="295"/>
        <end position="312"/>
    </location>
</feature>
<feature type="helix" evidence="44">
    <location>
        <begin position="319"/>
        <end position="343"/>
    </location>
</feature>
<feature type="helix" evidence="44">
    <location>
        <begin position="354"/>
        <end position="360"/>
    </location>
</feature>
<feature type="helix" evidence="44">
    <location>
        <begin position="363"/>
        <end position="374"/>
    </location>
</feature>
<feature type="helix" evidence="44">
    <location>
        <begin position="502"/>
        <end position="516"/>
    </location>
</feature>
<feature type="helix" evidence="44">
    <location>
        <begin position="521"/>
        <end position="523"/>
    </location>
</feature>
<feature type="strand" evidence="44">
    <location>
        <begin position="527"/>
        <end position="529"/>
    </location>
</feature>
<feature type="strand" evidence="44">
    <location>
        <begin position="537"/>
        <end position="539"/>
    </location>
</feature>
<feature type="helix" evidence="44">
    <location>
        <begin position="541"/>
        <end position="559"/>
    </location>
</feature>
<feature type="strand" evidence="44">
    <location>
        <begin position="560"/>
        <end position="562"/>
    </location>
</feature>
<feature type="strand" evidence="44">
    <location>
        <begin position="564"/>
        <end position="567"/>
    </location>
</feature>
<feature type="helix" evidence="44">
    <location>
        <begin position="570"/>
        <end position="572"/>
    </location>
</feature>
<feature type="turn" evidence="44">
    <location>
        <begin position="573"/>
        <end position="575"/>
    </location>
</feature>
<feature type="strand" evidence="44">
    <location>
        <begin position="582"/>
        <end position="588"/>
    </location>
</feature>
<feature type="helix" evidence="44">
    <location>
        <begin position="593"/>
        <end position="600"/>
    </location>
</feature>
<feature type="strand" evidence="44">
    <location>
        <begin position="605"/>
        <end position="607"/>
    </location>
</feature>
<feature type="strand" evidence="44">
    <location>
        <begin position="609"/>
        <end position="614"/>
    </location>
</feature>
<feature type="helix" evidence="44">
    <location>
        <begin position="630"/>
        <end position="638"/>
    </location>
</feature>
<feature type="helix" evidence="44">
    <location>
        <begin position="760"/>
        <end position="784"/>
    </location>
</feature>
<feature type="helix" evidence="44">
    <location>
        <begin position="792"/>
        <end position="800"/>
    </location>
</feature>
<feature type="turn" evidence="44">
    <location>
        <begin position="801"/>
        <end position="803"/>
    </location>
</feature>
<feature type="strand" evidence="44">
    <location>
        <begin position="804"/>
        <end position="806"/>
    </location>
</feature>
<feature type="strand" evidence="44">
    <location>
        <begin position="815"/>
        <end position="817"/>
    </location>
</feature>
<feature type="helix" evidence="44">
    <location>
        <begin position="823"/>
        <end position="833"/>
    </location>
</feature>
<feature type="strand" evidence="45">
    <location>
        <begin position="835"/>
        <end position="837"/>
    </location>
</feature>
<feature type="strand" evidence="44">
    <location>
        <begin position="847"/>
        <end position="850"/>
    </location>
</feature>
<feature type="strand" evidence="44">
    <location>
        <begin position="852"/>
        <end position="854"/>
    </location>
</feature>
<feature type="strand" evidence="44">
    <location>
        <begin position="856"/>
        <end position="860"/>
    </location>
</feature>
<feature type="strand" evidence="44">
    <location>
        <begin position="863"/>
        <end position="866"/>
    </location>
</feature>
<feature type="strand" evidence="45">
    <location>
        <begin position="882"/>
        <end position="884"/>
    </location>
</feature>
<feature type="helix" evidence="44">
    <location>
        <begin position="885"/>
        <end position="903"/>
    </location>
</feature>
<feature type="strand" evidence="44">
    <location>
        <begin position="910"/>
        <end position="912"/>
    </location>
</feature>
<feature type="turn" evidence="45">
    <location>
        <begin position="914"/>
        <end position="917"/>
    </location>
</feature>
<feature type="helix" evidence="44">
    <location>
        <begin position="923"/>
        <end position="926"/>
    </location>
</feature>
<feature type="helix" evidence="44">
    <location>
        <begin position="932"/>
        <end position="940"/>
    </location>
</feature>
<feature type="strand" evidence="44">
    <location>
        <begin position="948"/>
        <end position="950"/>
    </location>
</feature>
<feature type="strand" evidence="44">
    <location>
        <begin position="952"/>
        <end position="956"/>
    </location>
</feature>
<feature type="strand" evidence="44">
    <location>
        <begin position="963"/>
        <end position="965"/>
    </location>
</feature>
<feature type="strand" evidence="44">
    <location>
        <begin position="974"/>
        <end position="978"/>
    </location>
</feature>
<feature type="strand" evidence="44">
    <location>
        <begin position="981"/>
        <end position="986"/>
    </location>
</feature>
<feature type="turn" evidence="44">
    <location>
        <begin position="989"/>
        <end position="991"/>
    </location>
</feature>
<feature type="turn" evidence="46">
    <location>
        <begin position="1001"/>
        <end position="1003"/>
    </location>
</feature>
<feature type="strand" evidence="44">
    <location>
        <begin position="1005"/>
        <end position="1014"/>
    </location>
</feature>
<feature type="strand" evidence="44">
    <location>
        <begin position="1023"/>
        <end position="1026"/>
    </location>
</feature>
<feature type="strand" evidence="44">
    <location>
        <begin position="1029"/>
        <end position="1033"/>
    </location>
</feature>
<feature type="strand" evidence="44">
    <location>
        <begin position="1036"/>
        <end position="1042"/>
    </location>
</feature>
<feature type="helix" evidence="44">
    <location>
        <begin position="1046"/>
        <end position="1061"/>
    </location>
</feature>
<feature type="strand" evidence="44">
    <location>
        <begin position="1078"/>
        <end position="1080"/>
    </location>
</feature>
<feature type="strand" evidence="44">
    <location>
        <begin position="1083"/>
        <end position="1089"/>
    </location>
</feature>
<feature type="strand" evidence="44">
    <location>
        <begin position="1091"/>
        <end position="1093"/>
    </location>
</feature>
<feature type="strand" evidence="44">
    <location>
        <begin position="1095"/>
        <end position="1097"/>
    </location>
</feature>
<feature type="helix" evidence="44">
    <location>
        <begin position="1099"/>
        <end position="1107"/>
    </location>
</feature>
<feature type="helix" evidence="44">
    <location>
        <begin position="1118"/>
        <end position="1123"/>
    </location>
</feature>
<feature type="turn" evidence="44">
    <location>
        <begin position="1129"/>
        <end position="1133"/>
    </location>
</feature>
<feature type="strand" evidence="44">
    <location>
        <begin position="1138"/>
        <end position="1141"/>
    </location>
</feature>
<feature type="strand" evidence="44">
    <location>
        <begin position="1143"/>
        <end position="1145"/>
    </location>
</feature>
<feature type="strand" evidence="44">
    <location>
        <begin position="1153"/>
        <end position="1157"/>
    </location>
</feature>
<feature type="strand" evidence="44">
    <location>
        <begin position="1165"/>
        <end position="1169"/>
    </location>
</feature>
<feature type="helix" evidence="44">
    <location>
        <begin position="1176"/>
        <end position="1180"/>
    </location>
</feature>
<feature type="strand" evidence="44">
    <location>
        <begin position="1191"/>
        <end position="1194"/>
    </location>
</feature>
<feature type="strand" evidence="44">
    <location>
        <begin position="1207"/>
        <end position="1209"/>
    </location>
</feature>
<feature type="strand" evidence="45">
    <location>
        <begin position="1211"/>
        <end position="1213"/>
    </location>
</feature>
<feature type="turn" evidence="44">
    <location>
        <begin position="1222"/>
        <end position="1229"/>
    </location>
</feature>
<feature type="helix" evidence="44">
    <location>
        <begin position="1231"/>
        <end position="1233"/>
    </location>
</feature>
<feature type="strand" evidence="44">
    <location>
        <begin position="1235"/>
        <end position="1237"/>
    </location>
</feature>
<feature type="helix" evidence="44">
    <location>
        <begin position="1239"/>
        <end position="1241"/>
    </location>
</feature>
<feature type="strand" evidence="45">
    <location>
        <begin position="1242"/>
        <end position="1244"/>
    </location>
</feature>
<feature type="helix" evidence="44">
    <location>
        <begin position="1249"/>
        <end position="1281"/>
    </location>
</feature>
<feature type="helix" evidence="44">
    <location>
        <begin position="1525"/>
        <end position="1545"/>
    </location>
</feature>
<feature type="turn" evidence="45">
    <location>
        <begin position="1548"/>
        <end position="1551"/>
    </location>
</feature>
<feature type="helix" evidence="44">
    <location>
        <begin position="1568"/>
        <end position="1580"/>
    </location>
</feature>
<feature type="strand" evidence="45">
    <location>
        <begin position="1581"/>
        <end position="1585"/>
    </location>
</feature>
<feature type="strand" evidence="44">
    <location>
        <begin position="1587"/>
        <end position="1589"/>
    </location>
</feature>
<feature type="helix" evidence="44">
    <location>
        <begin position="1608"/>
        <end position="1615"/>
    </location>
</feature>
<feature type="helix" evidence="44">
    <location>
        <begin position="1621"/>
        <end position="1628"/>
    </location>
</feature>
<feature type="strand" evidence="44">
    <location>
        <begin position="1632"/>
        <end position="1635"/>
    </location>
</feature>
<feature type="helix" evidence="44">
    <location>
        <begin position="1636"/>
        <end position="1649"/>
    </location>
</feature>
<feature type="turn" evidence="44">
    <location>
        <begin position="1659"/>
        <end position="1664"/>
    </location>
</feature>
<feature type="strand" evidence="44">
    <location>
        <begin position="1665"/>
        <end position="1669"/>
    </location>
</feature>
<feature type="strand" evidence="44">
    <location>
        <begin position="1672"/>
        <end position="1674"/>
    </location>
</feature>
<feature type="turn" evidence="44">
    <location>
        <begin position="1675"/>
        <end position="1678"/>
    </location>
</feature>
<feature type="helix" evidence="44">
    <location>
        <begin position="1723"/>
        <end position="1730"/>
    </location>
</feature>
<feature type="helix" evidence="44">
    <location>
        <begin position="1733"/>
        <end position="1735"/>
    </location>
</feature>
<feature type="helix" evidence="44">
    <location>
        <begin position="1742"/>
        <end position="1763"/>
    </location>
</feature>
<feature type="strand" evidence="46">
    <location>
        <begin position="1765"/>
        <end position="1767"/>
    </location>
</feature>
<feature type="helix" evidence="44">
    <location>
        <begin position="1769"/>
        <end position="1779"/>
    </location>
</feature>
<feature type="helix" evidence="44">
    <location>
        <begin position="1782"/>
        <end position="1791"/>
    </location>
</feature>
<feature type="helix" evidence="44">
    <location>
        <begin position="1794"/>
        <end position="1796"/>
    </location>
</feature>
<feature type="turn" evidence="44">
    <location>
        <begin position="1805"/>
        <end position="1807"/>
    </location>
</feature>
<feature type="turn" evidence="44">
    <location>
        <begin position="1820"/>
        <end position="1822"/>
    </location>
</feature>
<feature type="helix" evidence="44">
    <location>
        <begin position="1839"/>
        <end position="1841"/>
    </location>
</feature>
<feature type="turn" evidence="44">
    <location>
        <begin position="1842"/>
        <end position="1845"/>
    </location>
</feature>
<feature type="helix" evidence="44">
    <location>
        <begin position="1848"/>
        <end position="1851"/>
    </location>
</feature>
<feature type="turn" evidence="44">
    <location>
        <begin position="1892"/>
        <end position="1894"/>
    </location>
</feature>
<feature type="strand" evidence="44">
    <location>
        <begin position="1895"/>
        <end position="1899"/>
    </location>
</feature>
<feature type="helix" evidence="44">
    <location>
        <begin position="1900"/>
        <end position="1930"/>
    </location>
</feature>
<feature type="strand" evidence="44">
    <location>
        <begin position="1937"/>
        <end position="1942"/>
    </location>
</feature>
<feature type="strand" evidence="44">
    <location>
        <begin position="1946"/>
        <end position="1948"/>
    </location>
</feature>
<feature type="strand" evidence="44">
    <location>
        <begin position="1958"/>
        <end position="1960"/>
    </location>
</feature>
<feature type="strand" evidence="44">
    <location>
        <begin position="1962"/>
        <end position="1965"/>
    </location>
</feature>
<feature type="helix" evidence="44">
    <location>
        <begin position="1982"/>
        <end position="1989"/>
    </location>
</feature>
<feature type="turn" evidence="45">
    <location>
        <begin position="1990"/>
        <end position="1993"/>
    </location>
</feature>
<feature type="helix" evidence="44">
    <location>
        <begin position="1994"/>
        <end position="1998"/>
    </location>
</feature>
<feature type="helix" evidence="44">
    <location>
        <begin position="2008"/>
        <end position="2014"/>
    </location>
</feature>
<feature type="helix" evidence="44">
    <location>
        <begin position="2029"/>
        <end position="2048"/>
    </location>
</feature>
<feature type="helix" evidence="44">
    <location>
        <begin position="2056"/>
        <end position="2066"/>
    </location>
</feature>
<feature type="helix" evidence="44">
    <location>
        <begin position="2069"/>
        <end position="2078"/>
    </location>
</feature>
<feature type="strand" evidence="44">
    <location>
        <begin position="2082"/>
        <end position="2084"/>
    </location>
</feature>
<feature type="helix" evidence="44">
    <location>
        <begin position="2090"/>
        <end position="2105"/>
    </location>
</feature>
<feature type="helix" evidence="44">
    <location>
        <begin position="2132"/>
        <end position="2148"/>
    </location>
</feature>
<feature type="helix" evidence="44">
    <location>
        <begin position="2156"/>
        <end position="2172"/>
    </location>
</feature>
<feature type="helix" evidence="44">
    <location>
        <begin position="2179"/>
        <end position="2186"/>
    </location>
</feature>
<feature type="turn" evidence="44">
    <location>
        <begin position="2188"/>
        <end position="2190"/>
    </location>
</feature>
<feature type="strand" evidence="44">
    <location>
        <begin position="2191"/>
        <end position="2193"/>
    </location>
</feature>
<feature type="strand" evidence="44">
    <location>
        <begin position="2200"/>
        <end position="2203"/>
    </location>
</feature>
<feature type="strand" evidence="44">
    <location>
        <begin position="2205"/>
        <end position="2211"/>
    </location>
</feature>
<feature type="turn" evidence="44">
    <location>
        <begin position="2212"/>
        <end position="2214"/>
    </location>
</feature>
<feature type="strand" evidence="44">
    <location>
        <begin position="2215"/>
        <end position="2223"/>
    </location>
</feature>
<feature type="helix" evidence="44">
    <location>
        <begin position="2224"/>
        <end position="2238"/>
    </location>
</feature>
<gene>
    <name evidence="33 37" type="primary">Dcr-1</name>
    <name evidence="37" type="ORF">CG4792</name>
</gene>
<protein>
    <recommendedName>
        <fullName evidence="33">Endoribonuclease Dcr-1</fullName>
        <shortName evidence="31">Protein dicer-1</shortName>
        <ecNumber evidence="16 17 20 27">3.1.26.3</ecNumber>
    </recommendedName>
</protein>
<keyword id="KW-0002">3D-structure</keyword>
<keyword id="KW-0067">ATP-binding</keyword>
<keyword id="KW-0963">Cytoplasm</keyword>
<keyword id="KW-0255">Endonuclease</keyword>
<keyword id="KW-0347">Helicase</keyword>
<keyword id="KW-0378">Hydrolase</keyword>
<keyword id="KW-0460">Magnesium</keyword>
<keyword id="KW-0464">Manganese</keyword>
<keyword id="KW-0479">Metal-binding</keyword>
<keyword id="KW-0540">Nuclease</keyword>
<keyword id="KW-0547">Nucleotide-binding</keyword>
<keyword id="KW-0597">Phosphoprotein</keyword>
<keyword id="KW-1185">Reference proteome</keyword>
<keyword id="KW-0677">Repeat</keyword>
<keyword id="KW-0694">RNA-binding</keyword>
<keyword id="KW-0943">RNA-mediated gene silencing</keyword>